<sequence>MDLEAKLHEIRKPIMVLGTSSGAGKSLTVTAICRILKNLGEEPIPFKGQNMSNNAWIDWEGGEMAYSQALQAFACGINPSAEMNPILLKPQGNSTSEVIHLGKSIGTTTAQNYYKDWFIPGWEVIKKSLKSIYELNPNCRLIIEGAGSPVEMNLIHRDLTNLRVAKYLNANCLLVTDIERGGVFAQIIGTLELMKPEERKLIKGIIINRFRGDLSLFEDGKKWIENKTQIPVIGIIPWLNDSFPPEDSLDLIEKKSLSKNHEIKVGIIKLPSISNFSDFDPLENEETILIEWIRKSKNLSTYDFIILPGSKQTIKDQKFLENSGLSQDIRDYSNNEGNIIGICGGLQMLGTTLEDPYFKEGAKNYSEQKINGIGLLPLKTTFFKKKLTRQINTKSIWPCQSQINGFEIHNGQTILDDSQSSLKINPIFEDLDLGWFKENNKGGTIAGTYIHGIFENDSWREQYINLIRKSKNLPILNKKSISYKKKRESIIDNLANEFHKHLNLTSFLS</sequence>
<evidence type="ECO:0000255" key="1">
    <source>
        <dbReference type="HAMAP-Rule" id="MF_00028"/>
    </source>
</evidence>
<evidence type="ECO:0000305" key="2"/>
<keyword id="KW-0169">Cobalamin biosynthesis</keyword>
<keyword id="KW-0315">Glutamine amidotransferase</keyword>
<organism>
    <name type="scientific">Prochlorococcus marinus (strain MIT 9215)</name>
    <dbReference type="NCBI Taxonomy" id="93060"/>
    <lineage>
        <taxon>Bacteria</taxon>
        <taxon>Bacillati</taxon>
        <taxon>Cyanobacteriota</taxon>
        <taxon>Cyanophyceae</taxon>
        <taxon>Synechococcales</taxon>
        <taxon>Prochlorococcaceae</taxon>
        <taxon>Prochlorococcus</taxon>
    </lineage>
</organism>
<reference key="1">
    <citation type="journal article" date="2007" name="PLoS Genet.">
        <title>Patterns and implications of gene gain and loss in the evolution of Prochlorococcus.</title>
        <authorList>
            <person name="Kettler G.C."/>
            <person name="Martiny A.C."/>
            <person name="Huang K."/>
            <person name="Zucker J."/>
            <person name="Coleman M.L."/>
            <person name="Rodrigue S."/>
            <person name="Chen F."/>
            <person name="Lapidus A."/>
            <person name="Ferriera S."/>
            <person name="Johnson J."/>
            <person name="Steglich C."/>
            <person name="Church G.M."/>
            <person name="Richardson P."/>
            <person name="Chisholm S.W."/>
        </authorList>
    </citation>
    <scope>NUCLEOTIDE SEQUENCE [LARGE SCALE GENOMIC DNA]</scope>
    <source>
        <strain>MIT 9215</strain>
    </source>
</reference>
<gene>
    <name evidence="1" type="primary">cobQ</name>
    <name type="ordered locus">P9215_13661</name>
</gene>
<protein>
    <recommendedName>
        <fullName evidence="1">Cobyric acid synthase</fullName>
    </recommendedName>
</protein>
<dbReference type="EMBL" id="CP000825">
    <property type="protein sequence ID" value="ABV50981.1"/>
    <property type="status" value="ALT_INIT"/>
    <property type="molecule type" value="Genomic_DNA"/>
</dbReference>
<dbReference type="RefSeq" id="WP_041484398.1">
    <property type="nucleotide sequence ID" value="NC_009840.1"/>
</dbReference>
<dbReference type="SMR" id="A8G5V0"/>
<dbReference type="STRING" id="93060.P9215_13661"/>
<dbReference type="KEGG" id="pmh:P9215_13661"/>
<dbReference type="eggNOG" id="COG1492">
    <property type="taxonomic scope" value="Bacteria"/>
</dbReference>
<dbReference type="HOGENOM" id="CLU_019250_2_2_3"/>
<dbReference type="OrthoDB" id="9808302at2"/>
<dbReference type="UniPathway" id="UPA00148"/>
<dbReference type="Proteomes" id="UP000002014">
    <property type="component" value="Chromosome"/>
</dbReference>
<dbReference type="GO" id="GO:0015420">
    <property type="term" value="F:ABC-type vitamin B12 transporter activity"/>
    <property type="evidence" value="ECO:0007669"/>
    <property type="project" value="UniProtKB-UniRule"/>
</dbReference>
<dbReference type="GO" id="GO:0003824">
    <property type="term" value="F:catalytic activity"/>
    <property type="evidence" value="ECO:0007669"/>
    <property type="project" value="InterPro"/>
</dbReference>
<dbReference type="GO" id="GO:0009236">
    <property type="term" value="P:cobalamin biosynthetic process"/>
    <property type="evidence" value="ECO:0007669"/>
    <property type="project" value="UniProtKB-UniRule"/>
</dbReference>
<dbReference type="CDD" id="cd05389">
    <property type="entry name" value="CobQ_N"/>
    <property type="match status" value="1"/>
</dbReference>
<dbReference type="CDD" id="cd01750">
    <property type="entry name" value="GATase1_CobQ"/>
    <property type="match status" value="1"/>
</dbReference>
<dbReference type="Gene3D" id="3.40.50.880">
    <property type="match status" value="1"/>
</dbReference>
<dbReference type="Gene3D" id="3.40.50.300">
    <property type="entry name" value="P-loop containing nucleotide triphosphate hydrolases"/>
    <property type="match status" value="1"/>
</dbReference>
<dbReference type="HAMAP" id="MF_00028">
    <property type="entry name" value="CobQ"/>
    <property type="match status" value="1"/>
</dbReference>
<dbReference type="InterPro" id="IPR029062">
    <property type="entry name" value="Class_I_gatase-like"/>
</dbReference>
<dbReference type="InterPro" id="IPR002586">
    <property type="entry name" value="CobQ/CobB/MinD/ParA_Nub-bd_dom"/>
</dbReference>
<dbReference type="InterPro" id="IPR033949">
    <property type="entry name" value="CobQ_GATase1"/>
</dbReference>
<dbReference type="InterPro" id="IPR047045">
    <property type="entry name" value="CobQ_N"/>
</dbReference>
<dbReference type="InterPro" id="IPR004459">
    <property type="entry name" value="CobQ_synth"/>
</dbReference>
<dbReference type="InterPro" id="IPR011698">
    <property type="entry name" value="GATase_3"/>
</dbReference>
<dbReference type="InterPro" id="IPR027417">
    <property type="entry name" value="P-loop_NTPase"/>
</dbReference>
<dbReference type="NCBIfam" id="TIGR00313">
    <property type="entry name" value="cobQ"/>
    <property type="match status" value="1"/>
</dbReference>
<dbReference type="NCBIfam" id="NF001989">
    <property type="entry name" value="PRK00784.1"/>
    <property type="match status" value="1"/>
</dbReference>
<dbReference type="PANTHER" id="PTHR21343:SF1">
    <property type="entry name" value="COBYRIC ACID SYNTHASE"/>
    <property type="match status" value="1"/>
</dbReference>
<dbReference type="PANTHER" id="PTHR21343">
    <property type="entry name" value="DETHIOBIOTIN SYNTHETASE"/>
    <property type="match status" value="1"/>
</dbReference>
<dbReference type="Pfam" id="PF01656">
    <property type="entry name" value="CbiA"/>
    <property type="match status" value="1"/>
</dbReference>
<dbReference type="Pfam" id="PF07685">
    <property type="entry name" value="GATase_3"/>
    <property type="match status" value="1"/>
</dbReference>
<dbReference type="SUPFAM" id="SSF52317">
    <property type="entry name" value="Class I glutamine amidotransferase-like"/>
    <property type="match status" value="1"/>
</dbReference>
<dbReference type="SUPFAM" id="SSF52540">
    <property type="entry name" value="P-loop containing nucleoside triphosphate hydrolases"/>
    <property type="match status" value="1"/>
</dbReference>
<dbReference type="PROSITE" id="PS51274">
    <property type="entry name" value="GATASE_COBBQ"/>
    <property type="match status" value="1"/>
</dbReference>
<feature type="chain" id="PRO_0000332362" description="Cobyric acid synthase">
    <location>
        <begin position="1"/>
        <end position="509"/>
    </location>
</feature>
<feature type="domain" description="GATase cobBQ-type" evidence="1">
    <location>
        <begin position="262"/>
        <end position="459"/>
    </location>
</feature>
<feature type="active site" description="Nucleophile" evidence="1">
    <location>
        <position position="343"/>
    </location>
</feature>
<feature type="active site" evidence="1">
    <location>
        <position position="451"/>
    </location>
</feature>
<comment type="function">
    <text evidence="1">Catalyzes amidations at positions B, D, E, and G on adenosylcobyrinic A,C-diamide. NH(2) groups are provided by glutamine, and one molecule of ATP is hydrogenolyzed for each amidation.</text>
</comment>
<comment type="pathway">
    <text evidence="1">Cofactor biosynthesis; adenosylcobalamin biosynthesis.</text>
</comment>
<comment type="similarity">
    <text evidence="1">Belongs to the CobB/CobQ family. CobQ subfamily.</text>
</comment>
<comment type="sequence caution" evidence="2">
    <conflict type="erroneous initiation">
        <sequence resource="EMBL-CDS" id="ABV50981"/>
    </conflict>
</comment>
<name>COBQ_PROM2</name>
<accession>A8G5V0</accession>
<proteinExistence type="inferred from homology"/>